<reference key="1">
    <citation type="journal article" date="2004" name="Curr. Genet.">
        <title>Structural features and transcript-editing analysis of sugarcane (Saccharum officinarum L.) chloroplast genome.</title>
        <authorList>
            <person name="Calsa T. Jr."/>
            <person name="Carraro D.M."/>
            <person name="Benatti M.R."/>
            <person name="Barbosa A.C."/>
            <person name="Kitajima J.P."/>
            <person name="Carrer H."/>
        </authorList>
    </citation>
    <scope>NUCLEOTIDE SEQUENCE [LARGE SCALE GENOMIC DNA]</scope>
    <source>
        <strain>cv. SP-80-3280</strain>
    </source>
</reference>
<accession>Q6L3G2</accession>
<comment type="function">
    <text evidence="1">Binds to 23S rRNA.</text>
</comment>
<comment type="subunit">
    <text evidence="1">Part of the 50S ribosomal subunit.</text>
</comment>
<comment type="subcellular location">
    <subcellularLocation>
        <location>Plastid</location>
        <location>Chloroplast</location>
    </subcellularLocation>
</comment>
<comment type="similarity">
    <text evidence="1">Belongs to the universal ribosomal protein uL14 family.</text>
</comment>
<evidence type="ECO:0000255" key="1">
    <source>
        <dbReference type="HAMAP-Rule" id="MF_01367"/>
    </source>
</evidence>
<evidence type="ECO:0000305" key="2"/>
<dbReference type="EMBL" id="AE009947">
    <property type="protein sequence ID" value="AAT44631.1"/>
    <property type="molecule type" value="Genomic_DNA"/>
</dbReference>
<dbReference type="SMR" id="Q6L3G2"/>
<dbReference type="GO" id="GO:0009507">
    <property type="term" value="C:chloroplast"/>
    <property type="evidence" value="ECO:0007669"/>
    <property type="project" value="UniProtKB-SubCell"/>
</dbReference>
<dbReference type="GO" id="GO:0022625">
    <property type="term" value="C:cytosolic large ribosomal subunit"/>
    <property type="evidence" value="ECO:0007669"/>
    <property type="project" value="TreeGrafter"/>
</dbReference>
<dbReference type="GO" id="GO:0070180">
    <property type="term" value="F:large ribosomal subunit rRNA binding"/>
    <property type="evidence" value="ECO:0007669"/>
    <property type="project" value="TreeGrafter"/>
</dbReference>
<dbReference type="GO" id="GO:0003735">
    <property type="term" value="F:structural constituent of ribosome"/>
    <property type="evidence" value="ECO:0007669"/>
    <property type="project" value="InterPro"/>
</dbReference>
<dbReference type="GO" id="GO:0006412">
    <property type="term" value="P:translation"/>
    <property type="evidence" value="ECO:0007669"/>
    <property type="project" value="UniProtKB-UniRule"/>
</dbReference>
<dbReference type="CDD" id="cd00337">
    <property type="entry name" value="Ribosomal_uL14"/>
    <property type="match status" value="1"/>
</dbReference>
<dbReference type="FunFam" id="2.40.150.20:FF:000002">
    <property type="entry name" value="50S ribosomal protein L14, chloroplastic"/>
    <property type="match status" value="1"/>
</dbReference>
<dbReference type="Gene3D" id="2.40.150.20">
    <property type="entry name" value="Ribosomal protein L14"/>
    <property type="match status" value="1"/>
</dbReference>
<dbReference type="HAMAP" id="MF_01367">
    <property type="entry name" value="Ribosomal_uL14"/>
    <property type="match status" value="1"/>
</dbReference>
<dbReference type="InterPro" id="IPR000218">
    <property type="entry name" value="Ribosomal_uL14"/>
</dbReference>
<dbReference type="InterPro" id="IPR005745">
    <property type="entry name" value="Ribosomal_uL14_bac-type"/>
</dbReference>
<dbReference type="InterPro" id="IPR019972">
    <property type="entry name" value="Ribosomal_uL14_CS"/>
</dbReference>
<dbReference type="InterPro" id="IPR036853">
    <property type="entry name" value="Ribosomal_uL14_sf"/>
</dbReference>
<dbReference type="NCBIfam" id="TIGR01067">
    <property type="entry name" value="rplN_bact"/>
    <property type="match status" value="1"/>
</dbReference>
<dbReference type="PANTHER" id="PTHR11761">
    <property type="entry name" value="50S/60S RIBOSOMAL PROTEIN L14/L23"/>
    <property type="match status" value="1"/>
</dbReference>
<dbReference type="PANTHER" id="PTHR11761:SF3">
    <property type="entry name" value="LARGE RIBOSOMAL SUBUNIT PROTEIN UL14M"/>
    <property type="match status" value="1"/>
</dbReference>
<dbReference type="Pfam" id="PF00238">
    <property type="entry name" value="Ribosomal_L14"/>
    <property type="match status" value="1"/>
</dbReference>
<dbReference type="SMART" id="SM01374">
    <property type="entry name" value="Ribosomal_L14"/>
    <property type="match status" value="1"/>
</dbReference>
<dbReference type="SUPFAM" id="SSF50193">
    <property type="entry name" value="Ribosomal protein L14"/>
    <property type="match status" value="1"/>
</dbReference>
<dbReference type="PROSITE" id="PS00049">
    <property type="entry name" value="RIBOSOMAL_L14"/>
    <property type="match status" value="1"/>
</dbReference>
<keyword id="KW-0150">Chloroplast</keyword>
<keyword id="KW-0934">Plastid</keyword>
<keyword id="KW-0687">Ribonucleoprotein</keyword>
<keyword id="KW-0689">Ribosomal protein</keyword>
<keyword id="KW-0694">RNA-binding</keyword>
<keyword id="KW-0699">rRNA-binding</keyword>
<feature type="chain" id="PRO_0000226928" description="Large ribosomal subunit protein uL14c">
    <location>
        <begin position="1"/>
        <end position="123"/>
    </location>
</feature>
<protein>
    <recommendedName>
        <fullName evidence="1">Large ribosomal subunit protein uL14c</fullName>
    </recommendedName>
    <alternativeName>
        <fullName evidence="2">50S ribosomal protein L14, chloroplastic</fullName>
    </alternativeName>
</protein>
<geneLocation type="chloroplast"/>
<name>RK14_SACHY</name>
<organism>
    <name type="scientific">Saccharum hybrid</name>
    <name type="common">Sugarcane</name>
    <dbReference type="NCBI Taxonomy" id="15819"/>
    <lineage>
        <taxon>Eukaryota</taxon>
        <taxon>Viridiplantae</taxon>
        <taxon>Streptophyta</taxon>
        <taxon>Embryophyta</taxon>
        <taxon>Tracheophyta</taxon>
        <taxon>Spermatophyta</taxon>
        <taxon>Magnoliopsida</taxon>
        <taxon>Liliopsida</taxon>
        <taxon>Poales</taxon>
        <taxon>Poaceae</taxon>
        <taxon>PACMAD clade</taxon>
        <taxon>Panicoideae</taxon>
        <taxon>Andropogonodae</taxon>
        <taxon>Andropogoneae</taxon>
        <taxon>Saccharinae</taxon>
        <taxon>Saccharum</taxon>
    </lineage>
</organism>
<gene>
    <name evidence="1" type="primary">rpl14</name>
    <name type="ordered locus">PS001</name>
</gene>
<sequence length="123" mass="13544">MIQPQTLLNVADNSGARKLMCIRVIGAAGNQRYARIGDVIIAVIKDAVPQMPLERSEVIRAVIVRTRKEFKGDDGIIIRYDDNAAVIIDQKGNPKGTRVFGAVAEELRELNYTKIVSLAPEVL</sequence>
<proteinExistence type="inferred from homology"/>